<protein>
    <recommendedName>
        <fullName evidence="1">Protein ApaG</fullName>
    </recommendedName>
</protein>
<sequence>MNQRLSPIKVEVKTEYIEAQSTPDEEKYLFSYTITIINLGDQDVTLKSRYWCITDANGQQSEVEGAGVVGETPTIKPNTAYQYTSGTVLETPFGVMEGNYTMIKSNGEEFKAPISAFSLAVPGLLH</sequence>
<name>APAG_SHEPW</name>
<proteinExistence type="inferred from homology"/>
<gene>
    <name evidence="1" type="primary">apaG</name>
    <name type="ordered locus">swp_4088</name>
</gene>
<evidence type="ECO:0000255" key="1">
    <source>
        <dbReference type="HAMAP-Rule" id="MF_00791"/>
    </source>
</evidence>
<reference key="1">
    <citation type="journal article" date="2008" name="PLoS ONE">
        <title>Environmental adaptation: genomic analysis of the piezotolerant and psychrotolerant deep-sea iron reducing bacterium Shewanella piezotolerans WP3.</title>
        <authorList>
            <person name="Wang F."/>
            <person name="Wang J."/>
            <person name="Jian H."/>
            <person name="Zhang B."/>
            <person name="Li S."/>
            <person name="Wang F."/>
            <person name="Zeng X."/>
            <person name="Gao L."/>
            <person name="Bartlett D.H."/>
            <person name="Yu J."/>
            <person name="Hu S."/>
            <person name="Xiao X."/>
        </authorList>
    </citation>
    <scope>NUCLEOTIDE SEQUENCE [LARGE SCALE GENOMIC DNA]</scope>
    <source>
        <strain>WP3 / JCM 13877</strain>
    </source>
</reference>
<organism>
    <name type="scientific">Shewanella piezotolerans (strain WP3 / JCM 13877)</name>
    <dbReference type="NCBI Taxonomy" id="225849"/>
    <lineage>
        <taxon>Bacteria</taxon>
        <taxon>Pseudomonadati</taxon>
        <taxon>Pseudomonadota</taxon>
        <taxon>Gammaproteobacteria</taxon>
        <taxon>Alteromonadales</taxon>
        <taxon>Shewanellaceae</taxon>
        <taxon>Shewanella</taxon>
    </lineage>
</organism>
<accession>B8CSX6</accession>
<feature type="chain" id="PRO_1000133815" description="Protein ApaG">
    <location>
        <begin position="1"/>
        <end position="126"/>
    </location>
</feature>
<feature type="domain" description="ApaG" evidence="1">
    <location>
        <begin position="2"/>
        <end position="126"/>
    </location>
</feature>
<dbReference type="EMBL" id="CP000472">
    <property type="protein sequence ID" value="ACJ30752.1"/>
    <property type="molecule type" value="Genomic_DNA"/>
</dbReference>
<dbReference type="RefSeq" id="WP_020914093.1">
    <property type="nucleotide sequence ID" value="NC_011566.1"/>
</dbReference>
<dbReference type="SMR" id="B8CSX6"/>
<dbReference type="STRING" id="225849.swp_4088"/>
<dbReference type="KEGG" id="swp:swp_4088"/>
<dbReference type="eggNOG" id="COG2967">
    <property type="taxonomic scope" value="Bacteria"/>
</dbReference>
<dbReference type="HOGENOM" id="CLU_128074_0_0_6"/>
<dbReference type="OrthoDB" id="9795226at2"/>
<dbReference type="Proteomes" id="UP000000753">
    <property type="component" value="Chromosome"/>
</dbReference>
<dbReference type="GO" id="GO:0070987">
    <property type="term" value="P:error-free translesion synthesis"/>
    <property type="evidence" value="ECO:0007669"/>
    <property type="project" value="TreeGrafter"/>
</dbReference>
<dbReference type="Gene3D" id="2.60.40.1470">
    <property type="entry name" value="ApaG domain"/>
    <property type="match status" value="1"/>
</dbReference>
<dbReference type="HAMAP" id="MF_00791">
    <property type="entry name" value="ApaG"/>
    <property type="match status" value="1"/>
</dbReference>
<dbReference type="InterPro" id="IPR007474">
    <property type="entry name" value="ApaG_domain"/>
</dbReference>
<dbReference type="InterPro" id="IPR036767">
    <property type="entry name" value="ApaG_sf"/>
</dbReference>
<dbReference type="InterPro" id="IPR023065">
    <property type="entry name" value="Uncharacterised_ApaG"/>
</dbReference>
<dbReference type="NCBIfam" id="NF003967">
    <property type="entry name" value="PRK05461.1"/>
    <property type="match status" value="1"/>
</dbReference>
<dbReference type="PANTHER" id="PTHR14289">
    <property type="entry name" value="F-BOX ONLY PROTEIN 3"/>
    <property type="match status" value="1"/>
</dbReference>
<dbReference type="PANTHER" id="PTHR14289:SF16">
    <property type="entry name" value="POLYMERASE DELTA-INTERACTING PROTEIN 2"/>
    <property type="match status" value="1"/>
</dbReference>
<dbReference type="Pfam" id="PF04379">
    <property type="entry name" value="DUF525"/>
    <property type="match status" value="1"/>
</dbReference>
<dbReference type="SUPFAM" id="SSF110069">
    <property type="entry name" value="ApaG-like"/>
    <property type="match status" value="1"/>
</dbReference>
<dbReference type="PROSITE" id="PS51087">
    <property type="entry name" value="APAG"/>
    <property type="match status" value="1"/>
</dbReference>